<sequence length="278" mass="30554">MKTKTDFLKMKEQGEPITMLTAYDYPSAKLAEEAEVDMILVGDSLGMVVLGYDSTVPVTVEDMIHHTKAVRRGAKETFIVTDMPFMSYHVSLQETMMNARRIVQESGAHALKVEGAGEVISTIQYLTNAGIPVVAHLGLTPQSVGVLGGYKVQGKDAESAKKLIEDAKKCEEAGAIALVLECVPMQLAELISEQLTIPTIGIGAGQKVDGQVLVYHDLISYGVNRVPKFVKQYTSVQEEIVRGISQYVTEVKTRQFPEEKHSFTMKEEDRLALYGGKQ</sequence>
<name>PANB_BACC2</name>
<accession>B7IPB7</accession>
<reference key="1">
    <citation type="submission" date="2008-10" db="EMBL/GenBank/DDBJ databases">
        <title>Genome sequence of Bacillus cereus G9842.</title>
        <authorList>
            <person name="Dodson R.J."/>
            <person name="Durkin A.S."/>
            <person name="Rosovitz M.J."/>
            <person name="Rasko D.A."/>
            <person name="Hoffmaster A."/>
            <person name="Ravel J."/>
            <person name="Sutton G."/>
        </authorList>
    </citation>
    <scope>NUCLEOTIDE SEQUENCE [LARGE SCALE GENOMIC DNA]</scope>
    <source>
        <strain>G9842</strain>
    </source>
</reference>
<comment type="function">
    <text evidence="1">Catalyzes the reversible reaction in which hydroxymethyl group from 5,10-methylenetetrahydrofolate is transferred onto alpha-ketoisovalerate to form ketopantoate.</text>
</comment>
<comment type="catalytic activity">
    <reaction evidence="1">
        <text>3-methyl-2-oxobutanoate + (6R)-5,10-methylene-5,6,7,8-tetrahydrofolate + H2O = 2-dehydropantoate + (6S)-5,6,7,8-tetrahydrofolate</text>
        <dbReference type="Rhea" id="RHEA:11824"/>
        <dbReference type="ChEBI" id="CHEBI:11561"/>
        <dbReference type="ChEBI" id="CHEBI:11851"/>
        <dbReference type="ChEBI" id="CHEBI:15377"/>
        <dbReference type="ChEBI" id="CHEBI:15636"/>
        <dbReference type="ChEBI" id="CHEBI:57453"/>
        <dbReference type="EC" id="2.1.2.11"/>
    </reaction>
</comment>
<comment type="cofactor">
    <cofactor evidence="1">
        <name>Mg(2+)</name>
        <dbReference type="ChEBI" id="CHEBI:18420"/>
    </cofactor>
    <text evidence="1">Binds 1 Mg(2+) ion per subunit.</text>
</comment>
<comment type="pathway">
    <text evidence="1">Cofactor biosynthesis; (R)-pantothenate biosynthesis; (R)-pantoate from 3-methyl-2-oxobutanoate: step 1/2.</text>
</comment>
<comment type="subunit">
    <text evidence="1">Homodecamer; pentamer of dimers.</text>
</comment>
<comment type="subcellular location">
    <subcellularLocation>
        <location evidence="1">Cytoplasm</location>
    </subcellularLocation>
</comment>
<comment type="similarity">
    <text evidence="1">Belongs to the PanB family.</text>
</comment>
<gene>
    <name evidence="1" type="primary">panB</name>
    <name type="ordered locus">BCG9842_B3750</name>
</gene>
<keyword id="KW-0963">Cytoplasm</keyword>
<keyword id="KW-0460">Magnesium</keyword>
<keyword id="KW-0479">Metal-binding</keyword>
<keyword id="KW-0566">Pantothenate biosynthesis</keyword>
<keyword id="KW-0808">Transferase</keyword>
<proteinExistence type="inferred from homology"/>
<dbReference type="EC" id="2.1.2.11" evidence="1"/>
<dbReference type="EMBL" id="CP001186">
    <property type="protein sequence ID" value="ACK96515.1"/>
    <property type="molecule type" value="Genomic_DNA"/>
</dbReference>
<dbReference type="RefSeq" id="WP_000851105.1">
    <property type="nucleotide sequence ID" value="NC_011772.1"/>
</dbReference>
<dbReference type="SMR" id="B7IPB7"/>
<dbReference type="KEGG" id="bcg:BCG9842_B3750"/>
<dbReference type="HOGENOM" id="CLU_036645_1_0_9"/>
<dbReference type="UniPathway" id="UPA00028">
    <property type="reaction ID" value="UER00003"/>
</dbReference>
<dbReference type="Proteomes" id="UP000006744">
    <property type="component" value="Chromosome"/>
</dbReference>
<dbReference type="GO" id="GO:0005737">
    <property type="term" value="C:cytoplasm"/>
    <property type="evidence" value="ECO:0007669"/>
    <property type="project" value="UniProtKB-SubCell"/>
</dbReference>
<dbReference type="GO" id="GO:0003864">
    <property type="term" value="F:3-methyl-2-oxobutanoate hydroxymethyltransferase activity"/>
    <property type="evidence" value="ECO:0007669"/>
    <property type="project" value="UniProtKB-UniRule"/>
</dbReference>
<dbReference type="GO" id="GO:0000287">
    <property type="term" value="F:magnesium ion binding"/>
    <property type="evidence" value="ECO:0007669"/>
    <property type="project" value="TreeGrafter"/>
</dbReference>
<dbReference type="GO" id="GO:0015940">
    <property type="term" value="P:pantothenate biosynthetic process"/>
    <property type="evidence" value="ECO:0007669"/>
    <property type="project" value="UniProtKB-UniRule"/>
</dbReference>
<dbReference type="CDD" id="cd06557">
    <property type="entry name" value="KPHMT-like"/>
    <property type="match status" value="1"/>
</dbReference>
<dbReference type="FunFam" id="3.20.20.60:FF:000003">
    <property type="entry name" value="3-methyl-2-oxobutanoate hydroxymethyltransferase"/>
    <property type="match status" value="1"/>
</dbReference>
<dbReference type="Gene3D" id="3.20.20.60">
    <property type="entry name" value="Phosphoenolpyruvate-binding domains"/>
    <property type="match status" value="1"/>
</dbReference>
<dbReference type="HAMAP" id="MF_00156">
    <property type="entry name" value="PanB"/>
    <property type="match status" value="1"/>
</dbReference>
<dbReference type="InterPro" id="IPR003700">
    <property type="entry name" value="Pantoate_hydroxy_MeTrfase"/>
</dbReference>
<dbReference type="InterPro" id="IPR015813">
    <property type="entry name" value="Pyrv/PenolPyrv_kinase-like_dom"/>
</dbReference>
<dbReference type="InterPro" id="IPR040442">
    <property type="entry name" value="Pyrv_kinase-like_dom_sf"/>
</dbReference>
<dbReference type="NCBIfam" id="TIGR00222">
    <property type="entry name" value="panB"/>
    <property type="match status" value="1"/>
</dbReference>
<dbReference type="NCBIfam" id="NF001452">
    <property type="entry name" value="PRK00311.1"/>
    <property type="match status" value="1"/>
</dbReference>
<dbReference type="PANTHER" id="PTHR20881">
    <property type="entry name" value="3-METHYL-2-OXOBUTANOATE HYDROXYMETHYLTRANSFERASE"/>
    <property type="match status" value="1"/>
</dbReference>
<dbReference type="PANTHER" id="PTHR20881:SF0">
    <property type="entry name" value="3-METHYL-2-OXOBUTANOATE HYDROXYMETHYLTRANSFERASE"/>
    <property type="match status" value="1"/>
</dbReference>
<dbReference type="Pfam" id="PF02548">
    <property type="entry name" value="Pantoate_transf"/>
    <property type="match status" value="1"/>
</dbReference>
<dbReference type="PIRSF" id="PIRSF000388">
    <property type="entry name" value="Pantoate_hydroxy_MeTrfase"/>
    <property type="match status" value="1"/>
</dbReference>
<dbReference type="SUPFAM" id="SSF51621">
    <property type="entry name" value="Phosphoenolpyruvate/pyruvate domain"/>
    <property type="match status" value="1"/>
</dbReference>
<evidence type="ECO:0000255" key="1">
    <source>
        <dbReference type="HAMAP-Rule" id="MF_00156"/>
    </source>
</evidence>
<organism>
    <name type="scientific">Bacillus cereus (strain G9842)</name>
    <dbReference type="NCBI Taxonomy" id="405531"/>
    <lineage>
        <taxon>Bacteria</taxon>
        <taxon>Bacillati</taxon>
        <taxon>Bacillota</taxon>
        <taxon>Bacilli</taxon>
        <taxon>Bacillales</taxon>
        <taxon>Bacillaceae</taxon>
        <taxon>Bacillus</taxon>
        <taxon>Bacillus cereus group</taxon>
    </lineage>
</organism>
<feature type="chain" id="PRO_1000118115" description="3-methyl-2-oxobutanoate hydroxymethyltransferase">
    <location>
        <begin position="1"/>
        <end position="278"/>
    </location>
</feature>
<feature type="active site" description="Proton acceptor" evidence="1">
    <location>
        <position position="181"/>
    </location>
</feature>
<feature type="binding site" evidence="1">
    <location>
        <begin position="43"/>
        <end position="44"/>
    </location>
    <ligand>
        <name>3-methyl-2-oxobutanoate</name>
        <dbReference type="ChEBI" id="CHEBI:11851"/>
    </ligand>
</feature>
<feature type="binding site" evidence="1">
    <location>
        <position position="43"/>
    </location>
    <ligand>
        <name>Mg(2+)</name>
        <dbReference type="ChEBI" id="CHEBI:18420"/>
    </ligand>
</feature>
<feature type="binding site" evidence="1">
    <location>
        <position position="82"/>
    </location>
    <ligand>
        <name>3-methyl-2-oxobutanoate</name>
        <dbReference type="ChEBI" id="CHEBI:11851"/>
    </ligand>
</feature>
<feature type="binding site" evidence="1">
    <location>
        <position position="82"/>
    </location>
    <ligand>
        <name>Mg(2+)</name>
        <dbReference type="ChEBI" id="CHEBI:18420"/>
    </ligand>
</feature>
<feature type="binding site" evidence="1">
    <location>
        <position position="112"/>
    </location>
    <ligand>
        <name>3-methyl-2-oxobutanoate</name>
        <dbReference type="ChEBI" id="CHEBI:11851"/>
    </ligand>
</feature>
<feature type="binding site" evidence="1">
    <location>
        <position position="114"/>
    </location>
    <ligand>
        <name>Mg(2+)</name>
        <dbReference type="ChEBI" id="CHEBI:18420"/>
    </ligand>
</feature>
<protein>
    <recommendedName>
        <fullName evidence="1">3-methyl-2-oxobutanoate hydroxymethyltransferase</fullName>
        <ecNumber evidence="1">2.1.2.11</ecNumber>
    </recommendedName>
    <alternativeName>
        <fullName evidence="1">Ketopantoate hydroxymethyltransferase</fullName>
        <shortName evidence="1">KPHMT</shortName>
    </alternativeName>
</protein>